<keyword id="KW-0007">Acetylation</keyword>
<keyword id="KW-1015">Disulfide bond</keyword>
<keyword id="KW-0496">Mitochondrion</keyword>
<keyword id="KW-0520">NAD</keyword>
<keyword id="KW-0560">Oxidoreductase</keyword>
<keyword id="KW-0597">Phosphoprotein</keyword>
<keyword id="KW-1185">Reference proteome</keyword>
<keyword id="KW-0809">Transit peptide</keyword>
<reference key="1">
    <citation type="submission" date="2004-01" db="EMBL/GenBank/DDBJ databases">
        <title>Comparative analysis of succinic semialdehyde dehydrogenase in non three ape species.</title>
        <authorList>
            <person name="Blasi P."/>
            <person name="Malaspina P."/>
        </authorList>
    </citation>
    <scope>NUCLEOTIDE SEQUENCE [MRNA]</scope>
</reference>
<name>SSDH_PANTR</name>
<sequence>MATCIWLRSCGARRLGSTFPGCRLRPRAGGLVPASGPAPGPAQLRCYAGGLAGLSAALLRTDSFVGGRWLPAAATFPVQDPASGAALGMVADCGVREARAAVRAAYEAFCRWREVSAKERSSLLRKWYNLMIQNKDDLARIITAESGKPLKEAHGEILYSAFFLEWFSEEARRVYGDIIYTPAKDRRALVLKQPXGVAAVITPWNFPSAMITRKVGAALAAGCTVVVKPAEDTPFSALALAELASQAGIPSGVYNVIPCSRKNAKEVGEAICTDPLVSKISFTGSTTTGKILLHHAANSVKRVSMELGGLAPFIVFDSANVDQAVAGAMASKFRNTGQTCVCSNQFLVQRGIHDAFVKAFAEAMKKNLRVGNGFEEGTTQGPLINEKAVEKVEKQVNDAVSKGATVVTGGKRHQLGKNFFEPTLLCNVTQDMLCTHEETFGPLAPVIKFDTEEEAIAIANAADVGLAGYFYSQDPAQIWRVAEQLEVGMVGVNEGLISSVECPFGGVKQSGLGREGSKYGIDEYLELKYVCYGGL</sequence>
<dbReference type="EC" id="1.2.1.24"/>
<dbReference type="EMBL" id="AJ621752">
    <property type="protein sequence ID" value="CAF21869.1"/>
    <property type="molecule type" value="mRNA"/>
</dbReference>
<dbReference type="RefSeq" id="NP_001008991.1">
    <property type="nucleotide sequence ID" value="NM_001008991.1"/>
</dbReference>
<dbReference type="FunCoup" id="Q6A2H0">
    <property type="interactions" value="981"/>
</dbReference>
<dbReference type="STRING" id="9598.ENSPTRP00000070681"/>
<dbReference type="PaxDb" id="9598-ENSPTRP00000054687"/>
<dbReference type="GeneID" id="449515"/>
<dbReference type="KEGG" id="ptr:449515"/>
<dbReference type="CTD" id="7915"/>
<dbReference type="eggNOG" id="KOG2451">
    <property type="taxonomic scope" value="Eukaryota"/>
</dbReference>
<dbReference type="InParanoid" id="Q6A2H0"/>
<dbReference type="BRENDA" id="1.2.1.24">
    <property type="organism ID" value="4497"/>
</dbReference>
<dbReference type="UniPathway" id="UPA00733"/>
<dbReference type="Proteomes" id="UP000002277">
    <property type="component" value="Unplaced"/>
</dbReference>
<dbReference type="GO" id="GO:0005739">
    <property type="term" value="C:mitochondrion"/>
    <property type="evidence" value="ECO:0000318"/>
    <property type="project" value="GO_Central"/>
</dbReference>
<dbReference type="GO" id="GO:0042802">
    <property type="term" value="F:identical protein binding"/>
    <property type="evidence" value="ECO:0000250"/>
    <property type="project" value="UniProtKB"/>
</dbReference>
<dbReference type="GO" id="GO:0004777">
    <property type="term" value="F:succinate-semialdehyde dehydrogenase (NAD+) activity"/>
    <property type="evidence" value="ECO:0000250"/>
    <property type="project" value="UniProtKB"/>
</dbReference>
<dbReference type="GO" id="GO:0007417">
    <property type="term" value="P:central nervous system development"/>
    <property type="evidence" value="ECO:0000250"/>
    <property type="project" value="UniProtKB"/>
</dbReference>
<dbReference type="GO" id="GO:0009450">
    <property type="term" value="P:gamma-aminobutyric acid catabolic process"/>
    <property type="evidence" value="ECO:0000250"/>
    <property type="project" value="UniProtKB"/>
</dbReference>
<dbReference type="GO" id="GO:0006105">
    <property type="term" value="P:succinate metabolic process"/>
    <property type="evidence" value="ECO:0000250"/>
    <property type="project" value="UniProtKB"/>
</dbReference>
<dbReference type="CDD" id="cd07103">
    <property type="entry name" value="ALDH_F5_SSADH_GabD"/>
    <property type="match status" value="1"/>
</dbReference>
<dbReference type="FunFam" id="3.40.605.10:FF:000026">
    <property type="entry name" value="Aldehyde dehydrogenase, putative"/>
    <property type="match status" value="1"/>
</dbReference>
<dbReference type="FunFam" id="3.40.309.10:FF:000004">
    <property type="entry name" value="Succinate-semialdehyde dehydrogenase I"/>
    <property type="match status" value="1"/>
</dbReference>
<dbReference type="FunFam" id="3.40.605.10:FF:000096">
    <property type="entry name" value="Succinate-semialdehyde dehydrogenase, mitochondrial"/>
    <property type="match status" value="1"/>
</dbReference>
<dbReference type="Gene3D" id="3.40.605.10">
    <property type="entry name" value="Aldehyde Dehydrogenase, Chain A, domain 1"/>
    <property type="match status" value="1"/>
</dbReference>
<dbReference type="Gene3D" id="3.40.309.10">
    <property type="entry name" value="Aldehyde Dehydrogenase, Chain A, domain 2"/>
    <property type="match status" value="1"/>
</dbReference>
<dbReference type="InterPro" id="IPR016161">
    <property type="entry name" value="Ald_DH/histidinol_DH"/>
</dbReference>
<dbReference type="InterPro" id="IPR016163">
    <property type="entry name" value="Ald_DH_C"/>
</dbReference>
<dbReference type="InterPro" id="IPR016160">
    <property type="entry name" value="Ald_DH_CS_CYS"/>
</dbReference>
<dbReference type="InterPro" id="IPR029510">
    <property type="entry name" value="Ald_DH_CS_GLU"/>
</dbReference>
<dbReference type="InterPro" id="IPR016162">
    <property type="entry name" value="Ald_DH_N"/>
</dbReference>
<dbReference type="InterPro" id="IPR015590">
    <property type="entry name" value="Aldehyde_DH_dom"/>
</dbReference>
<dbReference type="InterPro" id="IPR050740">
    <property type="entry name" value="Aldehyde_DH_Superfamily"/>
</dbReference>
<dbReference type="InterPro" id="IPR010102">
    <property type="entry name" value="Succ_semiAld_DH"/>
</dbReference>
<dbReference type="NCBIfam" id="TIGR01780">
    <property type="entry name" value="SSADH"/>
    <property type="match status" value="1"/>
</dbReference>
<dbReference type="PANTHER" id="PTHR43353">
    <property type="entry name" value="SUCCINATE-SEMIALDEHYDE DEHYDROGENASE, MITOCHONDRIAL"/>
    <property type="match status" value="1"/>
</dbReference>
<dbReference type="PANTHER" id="PTHR43353:SF5">
    <property type="entry name" value="SUCCINATE-SEMIALDEHYDE DEHYDROGENASE, MITOCHONDRIAL"/>
    <property type="match status" value="1"/>
</dbReference>
<dbReference type="Pfam" id="PF00171">
    <property type="entry name" value="Aldedh"/>
    <property type="match status" value="1"/>
</dbReference>
<dbReference type="SUPFAM" id="SSF53720">
    <property type="entry name" value="ALDH-like"/>
    <property type="match status" value="1"/>
</dbReference>
<dbReference type="PROSITE" id="PS00070">
    <property type="entry name" value="ALDEHYDE_DEHYDR_CYS"/>
    <property type="match status" value="1"/>
</dbReference>
<dbReference type="PROSITE" id="PS00687">
    <property type="entry name" value="ALDEHYDE_DEHYDR_GLU"/>
    <property type="match status" value="1"/>
</dbReference>
<protein>
    <recommendedName>
        <fullName>Succinate-semialdehyde dehydrogenase, mitochondrial</fullName>
        <ecNumber>1.2.1.24</ecNumber>
    </recommendedName>
    <alternativeName>
        <fullName>Aldehyde dehydrogenase family 5 member A1</fullName>
    </alternativeName>
    <alternativeName>
        <fullName>NAD(+)-dependent succinic semialdehyde dehydrogenase</fullName>
    </alternativeName>
</protein>
<proteinExistence type="evidence at transcript level"/>
<comment type="function">
    <text evidence="1">Catalyzes one step in the degradation of the inhibitory neurotransmitter gamma-aminobutyric acid (GABA).</text>
</comment>
<comment type="catalytic activity">
    <reaction>
        <text>succinate semialdehyde + NAD(+) + H2O = succinate + NADH + 2 H(+)</text>
        <dbReference type="Rhea" id="RHEA:13217"/>
        <dbReference type="ChEBI" id="CHEBI:15377"/>
        <dbReference type="ChEBI" id="CHEBI:15378"/>
        <dbReference type="ChEBI" id="CHEBI:30031"/>
        <dbReference type="ChEBI" id="CHEBI:57540"/>
        <dbReference type="ChEBI" id="CHEBI:57706"/>
        <dbReference type="ChEBI" id="CHEBI:57945"/>
        <dbReference type="EC" id="1.2.1.24"/>
    </reaction>
</comment>
<comment type="activity regulation">
    <text evidence="1">Redox-regulated. Inhibited under oxydizing conditions (By similarity).</text>
</comment>
<comment type="pathway">
    <text>Amino-acid degradation; 4-aminobutanoate degradation.</text>
</comment>
<comment type="subunit">
    <text evidence="1">Homotetramer.</text>
</comment>
<comment type="subcellular location">
    <subcellularLocation>
        <location evidence="1">Mitochondrion</location>
    </subcellularLocation>
</comment>
<comment type="similarity">
    <text evidence="7">Belongs to the aldehyde dehydrogenase family.</text>
</comment>
<accession>Q6A2H0</accession>
<evidence type="ECO:0000250" key="1"/>
<evidence type="ECO:0000250" key="2">
    <source>
        <dbReference type="UniProtKB" id="P51649"/>
    </source>
</evidence>
<evidence type="ECO:0000250" key="3">
    <source>
        <dbReference type="UniProtKB" id="Q8BWF0"/>
    </source>
</evidence>
<evidence type="ECO:0000255" key="4"/>
<evidence type="ECO:0000255" key="5">
    <source>
        <dbReference type="PROSITE-ProRule" id="PRU10007"/>
    </source>
</evidence>
<evidence type="ECO:0000255" key="6">
    <source>
        <dbReference type="PROSITE-ProRule" id="PRU10008"/>
    </source>
</evidence>
<evidence type="ECO:0000305" key="7"/>
<organism>
    <name type="scientific">Pan troglodytes</name>
    <name type="common">Chimpanzee</name>
    <dbReference type="NCBI Taxonomy" id="9598"/>
    <lineage>
        <taxon>Eukaryota</taxon>
        <taxon>Metazoa</taxon>
        <taxon>Chordata</taxon>
        <taxon>Craniata</taxon>
        <taxon>Vertebrata</taxon>
        <taxon>Euteleostomi</taxon>
        <taxon>Mammalia</taxon>
        <taxon>Eutheria</taxon>
        <taxon>Euarchontoglires</taxon>
        <taxon>Primates</taxon>
        <taxon>Haplorrhini</taxon>
        <taxon>Catarrhini</taxon>
        <taxon>Hominidae</taxon>
        <taxon>Pan</taxon>
    </lineage>
</organism>
<feature type="transit peptide" description="Mitochondrion" evidence="4">
    <location>
        <begin position="1"/>
        <end position="47"/>
    </location>
</feature>
<feature type="chain" id="PRO_0000007186" description="Succinate-semialdehyde dehydrogenase, mitochondrial">
    <location>
        <begin position="48"/>
        <end position="535"/>
    </location>
</feature>
<feature type="active site" description="Proton acceptor" evidence="5 6">
    <location>
        <position position="306"/>
    </location>
</feature>
<feature type="active site" description="Nucleophile" evidence="5 6">
    <location>
        <position position="340"/>
    </location>
</feature>
<feature type="binding site" evidence="1">
    <location>
        <position position="213"/>
    </location>
    <ligand>
        <name>NAD(+)</name>
        <dbReference type="ChEBI" id="CHEBI:57540"/>
    </ligand>
</feature>
<feature type="binding site" evidence="1">
    <location>
        <position position="213"/>
    </location>
    <ligand>
        <name>substrate</name>
    </ligand>
</feature>
<feature type="binding site" evidence="1">
    <location>
        <begin position="228"/>
        <end position="231"/>
    </location>
    <ligand>
        <name>NAD(+)</name>
        <dbReference type="ChEBI" id="CHEBI:57540"/>
    </ligand>
</feature>
<feature type="binding site" evidence="1">
    <location>
        <begin position="284"/>
        <end position="289"/>
    </location>
    <ligand>
        <name>NAD(+)</name>
        <dbReference type="ChEBI" id="CHEBI:57540"/>
    </ligand>
</feature>
<feature type="binding site" evidence="1">
    <location>
        <position position="334"/>
    </location>
    <ligand>
        <name>substrate</name>
    </ligand>
</feature>
<feature type="binding site" evidence="1">
    <location>
        <position position="498"/>
    </location>
    <ligand>
        <name>substrate</name>
    </ligand>
</feature>
<feature type="site" description="Transition state stabilizer" evidence="1">
    <location>
        <position position="205"/>
    </location>
</feature>
<feature type="modified residue" description="N6-acetyllysine; alternate" evidence="2">
    <location>
        <position position="126"/>
    </location>
</feature>
<feature type="modified residue" description="N6-succinyllysine; alternate" evidence="3">
    <location>
        <position position="126"/>
    </location>
</feature>
<feature type="modified residue" description="N6-succinyllysine" evidence="3">
    <location>
        <position position="135"/>
    </location>
</feature>
<feature type="modified residue" description="N6-succinyllysine" evidence="3">
    <location>
        <position position="184"/>
    </location>
</feature>
<feature type="modified residue" description="N6-acetyllysine; alternate" evidence="3">
    <location>
        <position position="265"/>
    </location>
</feature>
<feature type="modified residue" description="N6-succinyllysine; alternate" evidence="3">
    <location>
        <position position="265"/>
    </location>
</feature>
<feature type="modified residue" description="N6-acetyllysine" evidence="3">
    <location>
        <position position="365"/>
    </location>
</feature>
<feature type="modified residue" description="N6-succinyllysine" evidence="3">
    <location>
        <position position="402"/>
    </location>
</feature>
<feature type="modified residue" description="N6-acetyllysine" evidence="3">
    <location>
        <position position="411"/>
    </location>
</feature>
<feature type="modified residue" description="Phosphoserine" evidence="2">
    <location>
        <position position="499"/>
    </location>
</feature>
<feature type="disulfide bond" description="In inhibited form" evidence="1">
    <location>
        <begin position="340"/>
        <end position="342"/>
    </location>
</feature>
<gene>
    <name type="primary">ALDH5A1</name>
</gene>